<protein>
    <recommendedName>
        <fullName>Capsid protein</fullName>
        <shortName>CP</shortName>
    </recommendedName>
    <alternativeName>
        <fullName>Coat protein</fullName>
    </alternativeName>
</protein>
<comment type="function">
    <text evidence="1">Capsid protein self-assembles to form an icosahedral capsid with a T=3 symmetry, about 26 nm in diameter, and consisting of 89 capsid proteins dimers (178 capsid proteins). Involved in viral genome encapsidation through the interaction between a capsid protein dimer and the multiple packaging signals present in the RNA genome. The capsid also contains 1 copy of the A2 maturation protein.</text>
</comment>
<comment type="function">
    <text evidence="1">Acts as a translational repressor of viral replicase synthesis late in infection. This latter function is the result of capsid protein interaction with an RNA hairpin which contains the replicase ribosome-binding site.</text>
</comment>
<comment type="subunit">
    <text evidence="1">Homodimer. The capsid proteins form dimers that assemble by group of 5. Twelve such pentamers are linked together with free dimers. The homodimers binds to the viral RNA via an operator hairpin, but also to many other RNA sequences in the viral genome; this interaction probably shifts the virus from the replicative to the assembly phase and ensures specific encapsidation of the viral genome.</text>
</comment>
<comment type="subcellular location">
    <subcellularLocation>
        <location evidence="1">Virion</location>
    </subcellularLocation>
    <text evidence="1">The shell is composed of 178 copies of the capsid protein and 1 copy of the maturation protein.</text>
</comment>
<comment type="similarity">
    <text evidence="3">Belongs to the Leviviricetes capsid protein family.</text>
</comment>
<proteinExistence type="evidence at protein level"/>
<reference key="1">
    <citation type="journal article" date="1967" name="Biochemistry">
        <title>Amino acid sequence studies on the tryptic peptides of the coat protein of the bacteriophage R17.</title>
        <authorList>
            <person name="Weber K."/>
        </authorList>
    </citation>
    <scope>PROTEIN SEQUENCE</scope>
</reference>
<reference key="2">
    <citation type="journal article" date="1987" name="Biochemistry">
        <title>RNA binding site of R17 coat protein.</title>
        <authorList>
            <person name="Romaniuk P.J."/>
            <person name="Lowary P."/>
            <person name="Wu H.-N."/>
            <person name="Stormo G."/>
            <person name="Uhlenbeck O.C."/>
        </authorList>
    </citation>
    <scope>MECHANISM OF TRANSLATION REGULATION</scope>
</reference>
<reference key="3">
    <citation type="journal article" date="1994" name="Nucleic Acids Res.">
        <title>An RNA-protein contact determined by 5-bromouridine substitution, photocrosslinking and sequencing.</title>
        <authorList>
            <person name="Willis M.C."/>
            <person name="LeCuyer K.A."/>
            <person name="Meisenheimer K.M."/>
            <person name="Uhlenbeck O.C."/>
            <person name="Koch T.H."/>
        </authorList>
    </citation>
    <scope>PROTEIN SEQUENCE OF 84-113</scope>
    <scope>PHOTOCROSS-LINKING OF TYR-85 WITH A RNA HAIRPIN</scope>
    <scope>MUTAGENESIS OF TYR-85</scope>
</reference>
<organismHost>
    <name type="scientific">Escherichia coli</name>
    <dbReference type="NCBI Taxonomy" id="562"/>
</organismHost>
<feature type="chain" id="PRO_0000164847" description="Capsid protein">
    <location>
        <begin position="1"/>
        <end position="129"/>
    </location>
</feature>
<feature type="region of interest" description="Viral RNA-binding" evidence="1">
    <location>
        <begin position="31"/>
        <end position="104"/>
    </location>
</feature>
<feature type="mutagenesis site" description="Binds, but does not photocross-link to RNA." evidence="2">
    <original>Y</original>
    <variation>S</variation>
    <location>
        <position position="85"/>
    </location>
</feature>
<sequence length="129" mass="13728">ASNFTQFVLVNDGGTGNVTVAPSNFANGVAEWISSNSRSQAYKVTCSVRQSSAQNRKYTIKVEVPKVATQTVGGVELPVAAWRSYLNMELTIPIFATNSDCELIVKAMQGLLKDGNPIPSAIAANSGIY</sequence>
<name>CAPSD_BPR17</name>
<accession>P69170</accession>
<accession>P03613</accession>
<keyword id="KW-0167">Capsid protein</keyword>
<keyword id="KW-0903">Direct protein sequencing</keyword>
<keyword id="KW-0678">Repressor</keyword>
<keyword id="KW-0694">RNA-binding</keyword>
<keyword id="KW-1142">T=3 icosahedral capsid protein</keyword>
<keyword id="KW-0810">Translation regulation</keyword>
<keyword id="KW-0946">Virion</keyword>
<evidence type="ECO:0000250" key="1">
    <source>
        <dbReference type="UniProtKB" id="P03612"/>
    </source>
</evidence>
<evidence type="ECO:0000269" key="2">
    <source>
    </source>
</evidence>
<evidence type="ECO:0000305" key="3"/>
<dbReference type="PIR" id="C04222">
    <property type="entry name" value="VCBPR7"/>
</dbReference>
<dbReference type="SMR" id="P69170"/>
<dbReference type="GO" id="GO:0039617">
    <property type="term" value="C:T=3 icosahedral viral capsid"/>
    <property type="evidence" value="ECO:0007669"/>
    <property type="project" value="UniProtKB-KW"/>
</dbReference>
<dbReference type="GO" id="GO:0003723">
    <property type="term" value="F:RNA binding"/>
    <property type="evidence" value="ECO:0007669"/>
    <property type="project" value="UniProtKB-KW"/>
</dbReference>
<dbReference type="GO" id="GO:0005198">
    <property type="term" value="F:structural molecule activity"/>
    <property type="evidence" value="ECO:0007669"/>
    <property type="project" value="InterPro"/>
</dbReference>
<dbReference type="GO" id="GO:0006417">
    <property type="term" value="P:regulation of translation"/>
    <property type="evidence" value="ECO:0007669"/>
    <property type="project" value="UniProtKB-KW"/>
</dbReference>
<dbReference type="Gene3D" id="3.30.380.10">
    <property type="entry name" value="MS2 Viral Coat Protein"/>
    <property type="match status" value="1"/>
</dbReference>
<dbReference type="InterPro" id="IPR002703">
    <property type="entry name" value="Levivir_coat"/>
</dbReference>
<dbReference type="InterPro" id="IPR015954">
    <property type="entry name" value="Phage_RNA-type_capsid"/>
</dbReference>
<dbReference type="Pfam" id="PF01819">
    <property type="entry name" value="Levi_coat"/>
    <property type="match status" value="1"/>
</dbReference>
<dbReference type="SUPFAM" id="SSF55405">
    <property type="entry name" value="RNA bacteriophage capsid protein"/>
    <property type="match status" value="1"/>
</dbReference>
<organism>
    <name type="scientific">Enterobacteria phage R17</name>
    <name type="common">Bacteriophage R17</name>
    <dbReference type="NCBI Taxonomy" id="12026"/>
    <lineage>
        <taxon>Viruses</taxon>
        <taxon>Riboviria</taxon>
        <taxon>Orthornavirae</taxon>
        <taxon>Lenarviricota</taxon>
        <taxon>Leviviricetes</taxon>
        <taxon>Norzivirales</taxon>
        <taxon>Fiersviridae</taxon>
        <taxon>Emesvirus</taxon>
        <taxon>Emesvirus zinderi</taxon>
    </lineage>
</organism>